<proteinExistence type="inferred from homology"/>
<dbReference type="EC" id="7.2.2.11" evidence="1"/>
<dbReference type="EMBL" id="AJ938182">
    <property type="protein sequence ID" value="CAI80923.1"/>
    <property type="molecule type" value="Genomic_DNA"/>
</dbReference>
<dbReference type="RefSeq" id="WP_000571252.1">
    <property type="nucleotide sequence ID" value="NC_007622.1"/>
</dbReference>
<dbReference type="SMR" id="Q2YXZ0"/>
<dbReference type="KEGG" id="sab:SAB1234c"/>
<dbReference type="HOGENOM" id="CLU_000604_1_23_9"/>
<dbReference type="GO" id="GO:0005886">
    <property type="term" value="C:plasma membrane"/>
    <property type="evidence" value="ECO:0007669"/>
    <property type="project" value="UniProtKB-SubCell"/>
</dbReference>
<dbReference type="GO" id="GO:0015413">
    <property type="term" value="F:ABC-type nickel transporter activity"/>
    <property type="evidence" value="ECO:0007669"/>
    <property type="project" value="UniProtKB-EC"/>
</dbReference>
<dbReference type="GO" id="GO:0005524">
    <property type="term" value="F:ATP binding"/>
    <property type="evidence" value="ECO:0007669"/>
    <property type="project" value="UniProtKB-KW"/>
</dbReference>
<dbReference type="GO" id="GO:0016887">
    <property type="term" value="F:ATP hydrolysis activity"/>
    <property type="evidence" value="ECO:0007669"/>
    <property type="project" value="InterPro"/>
</dbReference>
<dbReference type="CDD" id="cd03257">
    <property type="entry name" value="ABC_NikE_OppD_transporters"/>
    <property type="match status" value="1"/>
</dbReference>
<dbReference type="FunFam" id="3.40.50.300:FF:001829">
    <property type="entry name" value="Nickel import system ATP-binding protein NikE"/>
    <property type="match status" value="1"/>
</dbReference>
<dbReference type="Gene3D" id="3.40.50.300">
    <property type="entry name" value="P-loop containing nucleotide triphosphate hydrolases"/>
    <property type="match status" value="1"/>
</dbReference>
<dbReference type="InterPro" id="IPR003593">
    <property type="entry name" value="AAA+_ATPase"/>
</dbReference>
<dbReference type="InterPro" id="IPR050319">
    <property type="entry name" value="ABC_transp_ATP-bind"/>
</dbReference>
<dbReference type="InterPro" id="IPR003439">
    <property type="entry name" value="ABC_transporter-like_ATP-bd"/>
</dbReference>
<dbReference type="InterPro" id="IPR027417">
    <property type="entry name" value="P-loop_NTPase"/>
</dbReference>
<dbReference type="PANTHER" id="PTHR43776">
    <property type="entry name" value="TRANSPORT ATP-BINDING PROTEIN"/>
    <property type="match status" value="1"/>
</dbReference>
<dbReference type="Pfam" id="PF00005">
    <property type="entry name" value="ABC_tran"/>
    <property type="match status" value="1"/>
</dbReference>
<dbReference type="SMART" id="SM00382">
    <property type="entry name" value="AAA"/>
    <property type="match status" value="1"/>
</dbReference>
<dbReference type="SUPFAM" id="SSF52540">
    <property type="entry name" value="P-loop containing nucleoside triphosphate hydrolases"/>
    <property type="match status" value="1"/>
</dbReference>
<dbReference type="PROSITE" id="PS50893">
    <property type="entry name" value="ABC_TRANSPORTER_2"/>
    <property type="match status" value="1"/>
</dbReference>
<gene>
    <name evidence="1" type="primary">nikE</name>
    <name type="synonym">oppF2</name>
    <name type="ordered locus">SAB1234c</name>
</gene>
<feature type="chain" id="PRO_0000276801" description="Nickel import system ATP-binding protein NikE">
    <location>
        <begin position="1"/>
        <end position="233"/>
    </location>
</feature>
<feature type="domain" description="ABC transporter" evidence="2">
    <location>
        <begin position="2"/>
        <end position="228"/>
    </location>
</feature>
<feature type="binding site" evidence="2">
    <location>
        <begin position="35"/>
        <end position="42"/>
    </location>
    <ligand>
        <name>ATP</name>
        <dbReference type="ChEBI" id="CHEBI:30616"/>
    </ligand>
</feature>
<reference key="1">
    <citation type="journal article" date="2007" name="PLoS ONE">
        <title>Molecular correlates of host specialization in Staphylococcus aureus.</title>
        <authorList>
            <person name="Herron-Olson L."/>
            <person name="Fitzgerald J.R."/>
            <person name="Musser J.M."/>
            <person name="Kapur V."/>
        </authorList>
    </citation>
    <scope>NUCLEOTIDE SEQUENCE [LARGE SCALE GENOMIC DNA]</scope>
    <source>
        <strain>bovine RF122 / ET3-1</strain>
    </source>
</reference>
<evidence type="ECO:0000250" key="1">
    <source>
        <dbReference type="UniProtKB" id="Q2FYQ8"/>
    </source>
</evidence>
<evidence type="ECO:0000255" key="2">
    <source>
        <dbReference type="PROSITE-ProRule" id="PRU00434"/>
    </source>
</evidence>
<evidence type="ECO:0000305" key="3"/>
<keyword id="KW-0067">ATP-binding</keyword>
<keyword id="KW-1003">Cell membrane</keyword>
<keyword id="KW-0406">Ion transport</keyword>
<keyword id="KW-0472">Membrane</keyword>
<keyword id="KW-0533">Nickel</keyword>
<keyword id="KW-0921">Nickel transport</keyword>
<keyword id="KW-0547">Nucleotide-binding</keyword>
<keyword id="KW-1278">Translocase</keyword>
<keyword id="KW-0813">Transport</keyword>
<accession>Q2YXZ0</accession>
<comment type="function">
    <text evidence="1">Part of the ABC transporter complex NikABCDE (Opp2) involved in nickel import. Probably responsible for energy coupling to the transport system.</text>
</comment>
<comment type="catalytic activity">
    <reaction evidence="1">
        <text>Ni(2+)(out) + ATP + H2O = Ni(2+)(in) + ADP + phosphate + H(+)</text>
        <dbReference type="Rhea" id="RHEA:15557"/>
        <dbReference type="ChEBI" id="CHEBI:15377"/>
        <dbReference type="ChEBI" id="CHEBI:15378"/>
        <dbReference type="ChEBI" id="CHEBI:30616"/>
        <dbReference type="ChEBI" id="CHEBI:43474"/>
        <dbReference type="ChEBI" id="CHEBI:49786"/>
        <dbReference type="ChEBI" id="CHEBI:456216"/>
        <dbReference type="EC" id="7.2.2.11"/>
    </reaction>
    <physiologicalReaction direction="left-to-right" evidence="1">
        <dbReference type="Rhea" id="RHEA:15558"/>
    </physiologicalReaction>
</comment>
<comment type="subunit">
    <text evidence="1">The complex is composed of two ATP-binding proteins (NikD and NikE), two transmembrane proteins (NikB and NikC) and a solute-binding protein (NikA).</text>
</comment>
<comment type="subcellular location">
    <subcellularLocation>
        <location evidence="3">Cell membrane</location>
        <topology evidence="3">Peripheral membrane protein</topology>
    </subcellularLocation>
</comment>
<comment type="similarity">
    <text evidence="3">Belongs to the ABC transporter superfamily.</text>
</comment>
<organism>
    <name type="scientific">Staphylococcus aureus (strain bovine RF122 / ET3-1)</name>
    <dbReference type="NCBI Taxonomy" id="273036"/>
    <lineage>
        <taxon>Bacteria</taxon>
        <taxon>Bacillati</taxon>
        <taxon>Bacillota</taxon>
        <taxon>Bacilli</taxon>
        <taxon>Bacillales</taxon>
        <taxon>Staphylococcaceae</taxon>
        <taxon>Staphylococcus</taxon>
    </lineage>
</organism>
<name>NIKE_STAAB</name>
<protein>
    <recommendedName>
        <fullName evidence="1">Nickel import system ATP-binding protein NikE</fullName>
        <ecNumber evidence="1">7.2.2.11</ecNumber>
    </recommendedName>
</protein>
<sequence>MIELKHVTFGYNKKQMVLQDINITIPDGENVGILGESGCGKSTLASLVLGLFKPVKGEIYLSDNAVLPIFQHPLTSFNPDWTIETSLKEALYYYRGLTDNTAQDQLLIQHLSTFELNAQLLTKLPSEVSGGELQRFNVMRSLLAQPRVLICDEITSNLDVIAEQNVINILKAQTITNLNHFIVISHDLSVLQRLVNRIIVLKDGMIVDDFTIEELFNVDRHSYTKELVQAFSY</sequence>